<gene>
    <name type="primary">Col3a1</name>
</gene>
<dbReference type="EMBL" id="BC087039">
    <property type="protein sequence ID" value="AAH87039.1"/>
    <property type="molecule type" value="mRNA"/>
</dbReference>
<dbReference type="EMBL" id="X70369">
    <property type="protein sequence ID" value="CAA49832.1"/>
    <property type="molecule type" value="mRNA"/>
</dbReference>
<dbReference type="EMBL" id="AJ005395">
    <property type="protein sequence ID" value="CAA06510.1"/>
    <property type="molecule type" value="mRNA"/>
</dbReference>
<dbReference type="EMBL" id="M21354">
    <property type="protein sequence ID" value="AAA40942.1"/>
    <property type="molecule type" value="mRNA"/>
</dbReference>
<dbReference type="PIR" id="S41067">
    <property type="entry name" value="S41067"/>
</dbReference>
<dbReference type="RefSeq" id="NP_114474.1">
    <property type="nucleotide sequence ID" value="NM_032085.1"/>
</dbReference>
<dbReference type="SMR" id="P13941"/>
<dbReference type="BioGRID" id="249898">
    <property type="interactions" value="1"/>
</dbReference>
<dbReference type="FunCoup" id="P13941">
    <property type="interactions" value="188"/>
</dbReference>
<dbReference type="IntAct" id="P13941">
    <property type="interactions" value="2"/>
</dbReference>
<dbReference type="MINT" id="P13941"/>
<dbReference type="STRING" id="10116.ENSRNOP00000004956"/>
<dbReference type="GlyCosmos" id="P13941">
    <property type="glycosylation" value="1 site, No reported glycans"/>
</dbReference>
<dbReference type="GlyGen" id="P13941">
    <property type="glycosylation" value="4 sites"/>
</dbReference>
<dbReference type="iPTMnet" id="P13941"/>
<dbReference type="PhosphoSitePlus" id="P13941"/>
<dbReference type="PaxDb" id="10116-ENSRNOP00000004956"/>
<dbReference type="Ensembl" id="ENSRNOT00000004956.5">
    <property type="protein sequence ID" value="ENSRNOP00000004956.4"/>
    <property type="gene ID" value="ENSRNOG00000003357.5"/>
</dbReference>
<dbReference type="GeneID" id="84032"/>
<dbReference type="KEGG" id="rno:84032"/>
<dbReference type="UCSC" id="RGD:71029">
    <property type="organism name" value="rat"/>
</dbReference>
<dbReference type="AGR" id="RGD:71029"/>
<dbReference type="CTD" id="1281"/>
<dbReference type="RGD" id="71029">
    <property type="gene designation" value="Col3a1"/>
</dbReference>
<dbReference type="eggNOG" id="KOG3544">
    <property type="taxonomic scope" value="Eukaryota"/>
</dbReference>
<dbReference type="GeneTree" id="ENSGT00940000161229"/>
<dbReference type="HOGENOM" id="CLU_001074_2_3_1"/>
<dbReference type="InParanoid" id="P13941"/>
<dbReference type="OMA" id="NLDCPNP"/>
<dbReference type="OrthoDB" id="8939548at2759"/>
<dbReference type="TreeFam" id="TF344135"/>
<dbReference type="Reactome" id="R-RNO-1442490">
    <property type="pathway name" value="Collagen degradation"/>
</dbReference>
<dbReference type="Reactome" id="R-RNO-1474244">
    <property type="pathway name" value="Extracellular matrix organization"/>
</dbReference>
<dbReference type="Reactome" id="R-RNO-1650814">
    <property type="pathway name" value="Collagen biosynthesis and modifying enzymes"/>
</dbReference>
<dbReference type="Reactome" id="R-RNO-186797">
    <property type="pathway name" value="Signaling by PDGF"/>
</dbReference>
<dbReference type="Reactome" id="R-RNO-198933">
    <property type="pathway name" value="Immunoregulatory interactions between a Lymphoid and a non-Lymphoid cell"/>
</dbReference>
<dbReference type="Reactome" id="R-RNO-2022090">
    <property type="pathway name" value="Assembly of collagen fibrils and other multimeric structures"/>
</dbReference>
<dbReference type="Reactome" id="R-RNO-216083">
    <property type="pathway name" value="Integrin cell surface interactions"/>
</dbReference>
<dbReference type="Reactome" id="R-RNO-3000171">
    <property type="pathway name" value="Non-integrin membrane-ECM interactions"/>
</dbReference>
<dbReference type="Reactome" id="R-RNO-3000178">
    <property type="pathway name" value="ECM proteoglycans"/>
</dbReference>
<dbReference type="Reactome" id="R-RNO-419037">
    <property type="pathway name" value="NCAM1 interactions"/>
</dbReference>
<dbReference type="Reactome" id="R-RNO-8874081">
    <property type="pathway name" value="MET activates PTK2 signaling"/>
</dbReference>
<dbReference type="Reactome" id="R-RNO-8948216">
    <property type="pathway name" value="Collagen chain trimerization"/>
</dbReference>
<dbReference type="PRO" id="PR:P13941"/>
<dbReference type="Proteomes" id="UP000002494">
    <property type="component" value="Chromosome 9"/>
</dbReference>
<dbReference type="Bgee" id="ENSRNOG00000003357">
    <property type="expression patterns" value="Expressed in esophagus and 18 other cell types or tissues"/>
</dbReference>
<dbReference type="GO" id="GO:0005581">
    <property type="term" value="C:collagen trimer"/>
    <property type="evidence" value="ECO:0000266"/>
    <property type="project" value="RGD"/>
</dbReference>
<dbReference type="GO" id="GO:0005586">
    <property type="term" value="C:collagen type III trimer"/>
    <property type="evidence" value="ECO:0000266"/>
    <property type="project" value="RGD"/>
</dbReference>
<dbReference type="GO" id="GO:0062023">
    <property type="term" value="C:collagen-containing extracellular matrix"/>
    <property type="evidence" value="ECO:0000318"/>
    <property type="project" value="GO_Central"/>
</dbReference>
<dbReference type="GO" id="GO:0031012">
    <property type="term" value="C:extracellular matrix"/>
    <property type="evidence" value="ECO:0000266"/>
    <property type="project" value="RGD"/>
</dbReference>
<dbReference type="GO" id="GO:0005615">
    <property type="term" value="C:extracellular space"/>
    <property type="evidence" value="ECO:0000266"/>
    <property type="project" value="RGD"/>
</dbReference>
<dbReference type="GO" id="GO:0005201">
    <property type="term" value="F:extracellular matrix structural constituent"/>
    <property type="evidence" value="ECO:0000266"/>
    <property type="project" value="RGD"/>
</dbReference>
<dbReference type="GO" id="GO:0030020">
    <property type="term" value="F:extracellular matrix structural constituent conferring tensile strength"/>
    <property type="evidence" value="ECO:0000318"/>
    <property type="project" value="GO_Central"/>
</dbReference>
<dbReference type="GO" id="GO:0005178">
    <property type="term" value="F:integrin binding"/>
    <property type="evidence" value="ECO:0000266"/>
    <property type="project" value="RGD"/>
</dbReference>
<dbReference type="GO" id="GO:0046872">
    <property type="term" value="F:metal ion binding"/>
    <property type="evidence" value="ECO:0007669"/>
    <property type="project" value="UniProtKB-KW"/>
</dbReference>
<dbReference type="GO" id="GO:0048407">
    <property type="term" value="F:platelet-derived growth factor binding"/>
    <property type="evidence" value="ECO:0000266"/>
    <property type="project" value="RGD"/>
</dbReference>
<dbReference type="GO" id="GO:0002020">
    <property type="term" value="F:protease binding"/>
    <property type="evidence" value="ECO:0000266"/>
    <property type="project" value="RGD"/>
</dbReference>
<dbReference type="GO" id="GO:0046332">
    <property type="term" value="F:SMAD binding"/>
    <property type="evidence" value="ECO:0000266"/>
    <property type="project" value="RGD"/>
</dbReference>
<dbReference type="GO" id="GO:0035904">
    <property type="term" value="P:aorta development"/>
    <property type="evidence" value="ECO:0000266"/>
    <property type="project" value="RGD"/>
</dbReference>
<dbReference type="GO" id="GO:0060414">
    <property type="term" value="P:aorta smooth muscle tissue morphogenesis"/>
    <property type="evidence" value="ECO:0000266"/>
    <property type="project" value="RGD"/>
</dbReference>
<dbReference type="GO" id="GO:0071711">
    <property type="term" value="P:basement membrane organization"/>
    <property type="evidence" value="ECO:0000266"/>
    <property type="project" value="RGD"/>
</dbReference>
<dbReference type="GO" id="GO:0001568">
    <property type="term" value="P:blood vessel development"/>
    <property type="evidence" value="ECO:0000266"/>
    <property type="project" value="RGD"/>
</dbReference>
<dbReference type="GO" id="GO:0051216">
    <property type="term" value="P:cartilage development"/>
    <property type="evidence" value="ECO:0000266"/>
    <property type="project" value="RGD"/>
</dbReference>
<dbReference type="GO" id="GO:0007160">
    <property type="term" value="P:cell-matrix adhesion"/>
    <property type="evidence" value="ECO:0000266"/>
    <property type="project" value="RGD"/>
</dbReference>
<dbReference type="GO" id="GO:0071230">
    <property type="term" value="P:cellular response to amino acid stimulus"/>
    <property type="evidence" value="ECO:0000266"/>
    <property type="project" value="RGD"/>
</dbReference>
<dbReference type="GO" id="GO:0021987">
    <property type="term" value="P:cerebral cortex development"/>
    <property type="evidence" value="ECO:0000250"/>
    <property type="project" value="UniProtKB"/>
</dbReference>
<dbReference type="GO" id="GO:0002062">
    <property type="term" value="P:chondrocyte differentiation"/>
    <property type="evidence" value="ECO:0000266"/>
    <property type="project" value="RGD"/>
</dbReference>
<dbReference type="GO" id="GO:0030199">
    <property type="term" value="P:collagen fibril organization"/>
    <property type="evidence" value="ECO:0000266"/>
    <property type="project" value="RGD"/>
</dbReference>
<dbReference type="GO" id="GO:0048565">
    <property type="term" value="P:digestive tract development"/>
    <property type="evidence" value="ECO:0000266"/>
    <property type="project" value="RGD"/>
</dbReference>
<dbReference type="GO" id="GO:0048251">
    <property type="term" value="P:elastic fiber assembly"/>
    <property type="evidence" value="ECO:0000266"/>
    <property type="project" value="RGD"/>
</dbReference>
<dbReference type="GO" id="GO:0060350">
    <property type="term" value="P:endochondral bone morphogenesis"/>
    <property type="evidence" value="ECO:0000266"/>
    <property type="project" value="RGD"/>
</dbReference>
<dbReference type="GO" id="GO:0030198">
    <property type="term" value="P:extracellular matrix organization"/>
    <property type="evidence" value="ECO:0000266"/>
    <property type="project" value="RGD"/>
</dbReference>
<dbReference type="GO" id="GO:0048144">
    <property type="term" value="P:fibroblast proliferation"/>
    <property type="evidence" value="ECO:0000266"/>
    <property type="project" value="RGD"/>
</dbReference>
<dbReference type="GO" id="GO:0010467">
    <property type="term" value="P:gene expression"/>
    <property type="evidence" value="ECO:0000266"/>
    <property type="project" value="RGD"/>
</dbReference>
<dbReference type="GO" id="GO:0007507">
    <property type="term" value="P:heart development"/>
    <property type="evidence" value="ECO:0000266"/>
    <property type="project" value="RGD"/>
</dbReference>
<dbReference type="GO" id="GO:0001701">
    <property type="term" value="P:in utero embryonic development"/>
    <property type="evidence" value="ECO:0000266"/>
    <property type="project" value="RGD"/>
</dbReference>
<dbReference type="GO" id="GO:0007229">
    <property type="term" value="P:integrin-mediated signaling pathway"/>
    <property type="evidence" value="ECO:0000266"/>
    <property type="project" value="RGD"/>
</dbReference>
<dbReference type="GO" id="GO:0021819">
    <property type="term" value="P:layer formation in cerebral cortex"/>
    <property type="evidence" value="ECO:0000266"/>
    <property type="project" value="RGD"/>
</dbReference>
<dbReference type="GO" id="GO:0036022">
    <property type="term" value="P:limb joint morphogenesis"/>
    <property type="evidence" value="ECO:0000266"/>
    <property type="project" value="RGD"/>
</dbReference>
<dbReference type="GO" id="GO:0030324">
    <property type="term" value="P:lung development"/>
    <property type="evidence" value="ECO:0000266"/>
    <property type="project" value="RGD"/>
</dbReference>
<dbReference type="GO" id="GO:0035264">
    <property type="term" value="P:multicellular organism growth"/>
    <property type="evidence" value="ECO:0000266"/>
    <property type="project" value="RGD"/>
</dbReference>
<dbReference type="GO" id="GO:0050777">
    <property type="term" value="P:negative regulation of immune response"/>
    <property type="evidence" value="ECO:0000266"/>
    <property type="project" value="RGD"/>
</dbReference>
<dbReference type="GO" id="GO:2001223">
    <property type="term" value="P:negative regulation of neuron migration"/>
    <property type="evidence" value="ECO:0000250"/>
    <property type="project" value="UniProtKB"/>
</dbReference>
<dbReference type="GO" id="GO:0001764">
    <property type="term" value="P:neuron migration"/>
    <property type="evidence" value="ECO:0000266"/>
    <property type="project" value="RGD"/>
</dbReference>
<dbReference type="GO" id="GO:0035025">
    <property type="term" value="P:positive regulation of Rho protein signal transduction"/>
    <property type="evidence" value="ECO:0000250"/>
    <property type="project" value="UniProtKB"/>
</dbReference>
<dbReference type="GO" id="GO:1990776">
    <property type="term" value="P:response to angiotensin"/>
    <property type="evidence" value="ECO:0000266"/>
    <property type="project" value="RGD"/>
</dbReference>
<dbReference type="GO" id="GO:0034097">
    <property type="term" value="P:response to cytokine"/>
    <property type="evidence" value="ECO:0000266"/>
    <property type="project" value="RGD"/>
</dbReference>
<dbReference type="GO" id="GO:0009612">
    <property type="term" value="P:response to mechanical stimulus"/>
    <property type="evidence" value="ECO:0000270"/>
    <property type="project" value="RGD"/>
</dbReference>
<dbReference type="GO" id="GO:0009314">
    <property type="term" value="P:response to radiation"/>
    <property type="evidence" value="ECO:0000266"/>
    <property type="project" value="RGD"/>
</dbReference>
<dbReference type="GO" id="GO:0001501">
    <property type="term" value="P:skeletal system development"/>
    <property type="evidence" value="ECO:0000270"/>
    <property type="project" value="RGD"/>
</dbReference>
<dbReference type="GO" id="GO:0043588">
    <property type="term" value="P:skin development"/>
    <property type="evidence" value="ECO:0000266"/>
    <property type="project" value="RGD"/>
</dbReference>
<dbReference type="GO" id="GO:0097435">
    <property type="term" value="P:supramolecular fiber organization"/>
    <property type="evidence" value="ECO:0000266"/>
    <property type="project" value="RGD"/>
</dbReference>
<dbReference type="GO" id="GO:0001894">
    <property type="term" value="P:tissue homeostasis"/>
    <property type="evidence" value="ECO:0000266"/>
    <property type="project" value="RGD"/>
</dbReference>
<dbReference type="GO" id="GO:0007179">
    <property type="term" value="P:transforming growth factor beta receptor signaling pathway"/>
    <property type="evidence" value="ECO:0000266"/>
    <property type="project" value="RGD"/>
</dbReference>
<dbReference type="GO" id="GO:0032905">
    <property type="term" value="P:transforming growth factor beta1 production"/>
    <property type="evidence" value="ECO:0000266"/>
    <property type="project" value="RGD"/>
</dbReference>
<dbReference type="GO" id="GO:0042060">
    <property type="term" value="P:wound healing"/>
    <property type="evidence" value="ECO:0000266"/>
    <property type="project" value="RGD"/>
</dbReference>
<dbReference type="FunFam" id="2.60.120.1000:FF:000001">
    <property type="entry name" value="Collagen alpha-1 type I chain"/>
    <property type="match status" value="1"/>
</dbReference>
<dbReference type="FunFam" id="2.10.70.10:FF:000013">
    <property type="entry name" value="Collagen, type I, alpha 1"/>
    <property type="match status" value="1"/>
</dbReference>
<dbReference type="Gene3D" id="2.60.120.1000">
    <property type="match status" value="1"/>
</dbReference>
<dbReference type="Gene3D" id="2.10.70.10">
    <property type="entry name" value="Complement Module, domain 1"/>
    <property type="match status" value="1"/>
</dbReference>
<dbReference type="InterPro" id="IPR008160">
    <property type="entry name" value="Collagen"/>
</dbReference>
<dbReference type="InterPro" id="IPR050938">
    <property type="entry name" value="Collagen_Structural_Proteins"/>
</dbReference>
<dbReference type="InterPro" id="IPR000885">
    <property type="entry name" value="Fib_collagen_C"/>
</dbReference>
<dbReference type="InterPro" id="IPR001007">
    <property type="entry name" value="VWF_dom"/>
</dbReference>
<dbReference type="PANTHER" id="PTHR37456:SF5">
    <property type="entry name" value="COLLAGEN TYPE XIII ALPHA 1 CHAIN"/>
    <property type="match status" value="1"/>
</dbReference>
<dbReference type="PANTHER" id="PTHR37456">
    <property type="entry name" value="SI:CH211-266K2.1"/>
    <property type="match status" value="1"/>
</dbReference>
<dbReference type="Pfam" id="PF01410">
    <property type="entry name" value="COLFI"/>
    <property type="match status" value="1"/>
</dbReference>
<dbReference type="Pfam" id="PF01391">
    <property type="entry name" value="Collagen"/>
    <property type="match status" value="3"/>
</dbReference>
<dbReference type="Pfam" id="PF00093">
    <property type="entry name" value="VWC"/>
    <property type="match status" value="1"/>
</dbReference>
<dbReference type="SMART" id="SM00038">
    <property type="entry name" value="COLFI"/>
    <property type="match status" value="1"/>
</dbReference>
<dbReference type="SMART" id="SM00214">
    <property type="entry name" value="VWC"/>
    <property type="match status" value="1"/>
</dbReference>
<dbReference type="SUPFAM" id="SSF57603">
    <property type="entry name" value="FnI-like domain"/>
    <property type="match status" value="1"/>
</dbReference>
<dbReference type="PROSITE" id="PS51461">
    <property type="entry name" value="NC1_FIB"/>
    <property type="match status" value="1"/>
</dbReference>
<dbReference type="PROSITE" id="PS01208">
    <property type="entry name" value="VWFC_1"/>
    <property type="match status" value="1"/>
</dbReference>
<dbReference type="PROSITE" id="PS50184">
    <property type="entry name" value="VWFC_2"/>
    <property type="match status" value="1"/>
</dbReference>
<sequence>MMSFVQCGTWFLLTLLHPSLILAQQSNVDELGCNYLGQSYESRDVWKPEPCQICVCDSGSVLCDDIMCDDEPLDCPNPEIPFGECCAICPQPSTPAPVIPDGNRPQGPKGDPGPPGIPGRNGDPGLPGQPGLPGPPGSPGICESCPTGGQNYSPQFDSYDVKSGVGGMGGYPGPAGPPGPPGPPGSSGHPGSPGSPGYQGPPGEPGQAGPAGPPGPPGAIGPSGPAGKDGESGRPGRPGERGLPGPPGIKGPAGIPGFPGMKGHRGFDGRNGEKGETGAPGLKGENGLPGDNGAPGPMGPRGAPGERGRPGLPGAAGARGNDGARGSDGQPGPPGPPGTAGFPGSPGAKGEVGPAGSPGSNGSPGQRGEPGPQGHAGAQGPPGPPGNNGSPGGKGEMGPAGIPGAPGLLGARGPPGPAGANGAPGQRGPSGEPGKNGAKGEPGARGERGEAGSPGIPGPKGEDGKDGSPGEPGANGVPGNPGERGAPGFRGPAGPNGAPGEKGPAGERGGPGPAGPRGVAGEPGRDGTPGGPGIRGMPGSPGGPGNDGKPGPPGSQGESGRPGPPGPSGPRGQPGVMGFPGPKGNDGAPGKNGERGGPGGPGLPGPAGKNGETGPQGPPGPTGAPGDKGDAGPPGPQGLQGIPGTSGPPGENGKPGEPGPKGEAGAPGVPGGKGDSGAPGERGPPGTAGTPGLRGGAGPPGPEGGKGPAGPPGPPGTSGPPGLQGMPGERGGPGSPGPKGEKGEPGGAGADGVPGKDGPRGPAGPIGPPGPAGQPGDKGEGGAPGLPGIAGPRGGPGERGEHGPPGPAGFPGAPGQNGEPGAKGERGAPGEKGEGGPPGAAGPPGGSGPAGPPGPQGVKGERGSPGGPGAAGFPGGRGLPGPPGNNGNPGPPGPSGAPGKDGPPGPAGNSGSPGNPGVAGPKGDAGQPGEKGPPGAQGPPGSPGPLGIAGLTGARGLAGPPGMPGPRGSPGPQGIKGESGKPGASGHNGERGPPGPQGLPGQPGTAGEPGRDGNPGSDGQPGRDGSPGGKGDRGENGSPGAPGAPGHPGPPGPVGPSGKNGDRGETGPAGPSGAPGPAGARGAPGPQGPRGDKGETGERGSNGIKGHRGFPGNPGPPGSPGAAGHQGAVGSPGPAGPRGPVGPHGPPGKDGSSGHPGPIGPPGPRGNRGERGSEGSPGHPGQPGPPGPPGAPGPCCGGGAAIAGVGGEKSGGFSPYYGDDPMDFKINTEEIMSSLKSVNGQIESLISPDGSRKNPARNCRDLKFCHPELKSGEYWVDPNQGCKMDAIKVFCNMETGETCINASPMTVPRKHWWTDAGAEKKHVWFGESMNGGFQFSYGNPDLPEDVLDVQLAFLRLLSSRASQNITYHCKNSIAYMDQANGNVKKSLKLMGSNEGEFKAEGNSKFTYTVLEDGCTKHTGEWSKTVFEYQTRKAMRLPIIDIAPYDIGGPDQEFGVDIGPVCFL</sequence>
<feature type="signal peptide" evidence="1">
    <location>
        <begin position="1"/>
        <end position="23"/>
    </location>
</feature>
<feature type="propeptide" id="PRO_0000005746" description="N-terminal propeptide" evidence="1">
    <location>
        <begin position="24"/>
        <end position="154"/>
    </location>
</feature>
<feature type="chain" id="PRO_0000005747" description="Collagen alpha-1(III) chain">
    <location>
        <begin position="155"/>
        <end position="1218"/>
    </location>
</feature>
<feature type="propeptide" id="PRO_0000043408" description="C-terminal propeptide" evidence="1">
    <location>
        <begin position="1219"/>
        <end position="1463"/>
    </location>
</feature>
<feature type="domain" description="VWFC" evidence="3">
    <location>
        <begin position="31"/>
        <end position="90"/>
    </location>
</feature>
<feature type="domain" description="Fibrillar collagen NC1" evidence="4">
    <location>
        <begin position="1229"/>
        <end position="1463"/>
    </location>
</feature>
<feature type="region of interest" description="Disordered" evidence="5">
    <location>
        <begin position="97"/>
        <end position="1195"/>
    </location>
</feature>
<feature type="region of interest" description="Nonhelical region (N-terminal)">
    <location>
        <begin position="155"/>
        <end position="169"/>
    </location>
</feature>
<feature type="region of interest" description="Triple-helical region">
    <location>
        <begin position="170"/>
        <end position="1195"/>
    </location>
</feature>
<feature type="compositionally biased region" description="Polar residues" evidence="5">
    <location>
        <begin position="147"/>
        <end position="156"/>
    </location>
</feature>
<feature type="compositionally biased region" description="Gly residues" evidence="5">
    <location>
        <begin position="164"/>
        <end position="173"/>
    </location>
</feature>
<feature type="compositionally biased region" description="Pro residues" evidence="5">
    <location>
        <begin position="174"/>
        <end position="184"/>
    </location>
</feature>
<feature type="compositionally biased region" description="Low complexity" evidence="5">
    <location>
        <begin position="186"/>
        <end position="198"/>
    </location>
</feature>
<feature type="compositionally biased region" description="Basic and acidic residues" evidence="5">
    <location>
        <begin position="228"/>
        <end position="240"/>
    </location>
</feature>
<feature type="compositionally biased region" description="Low complexity" evidence="5">
    <location>
        <begin position="250"/>
        <end position="259"/>
    </location>
</feature>
<feature type="compositionally biased region" description="Basic and acidic residues" evidence="5">
    <location>
        <begin position="265"/>
        <end position="276"/>
    </location>
</feature>
<feature type="compositionally biased region" description="Low complexity" evidence="5">
    <location>
        <begin position="310"/>
        <end position="321"/>
    </location>
</feature>
<feature type="compositionally biased region" description="Low complexity" evidence="5">
    <location>
        <begin position="354"/>
        <end position="379"/>
    </location>
</feature>
<feature type="compositionally biased region" description="Gly residues" evidence="5">
    <location>
        <begin position="389"/>
        <end position="398"/>
    </location>
</feature>
<feature type="compositionally biased region" description="Low complexity" evidence="5">
    <location>
        <begin position="399"/>
        <end position="429"/>
    </location>
</feature>
<feature type="compositionally biased region" description="Low complexity" evidence="5">
    <location>
        <begin position="481"/>
        <end position="502"/>
    </location>
</feature>
<feature type="compositionally biased region" description="Gly residues" evidence="5">
    <location>
        <begin position="527"/>
        <end position="548"/>
    </location>
</feature>
<feature type="compositionally biased region" description="Low complexity" evidence="5">
    <location>
        <begin position="606"/>
        <end position="615"/>
    </location>
</feature>
<feature type="compositionally biased region" description="Low complexity" evidence="5">
    <location>
        <begin position="637"/>
        <end position="652"/>
    </location>
</feature>
<feature type="compositionally biased region" description="Gly residues" evidence="5">
    <location>
        <begin position="668"/>
        <end position="677"/>
    </location>
</feature>
<feature type="compositionally biased region" description="Low complexity" evidence="5">
    <location>
        <begin position="678"/>
        <end position="691"/>
    </location>
</feature>
<feature type="compositionally biased region" description="Gly residues" evidence="5">
    <location>
        <begin position="692"/>
        <end position="708"/>
    </location>
</feature>
<feature type="compositionally biased region" description="Pro residues" evidence="5">
    <location>
        <begin position="709"/>
        <end position="718"/>
    </location>
</feature>
<feature type="compositionally biased region" description="Basic and acidic residues" evidence="5">
    <location>
        <begin position="822"/>
        <end position="834"/>
    </location>
</feature>
<feature type="compositionally biased region" description="Gly residues" evidence="5">
    <location>
        <begin position="835"/>
        <end position="849"/>
    </location>
</feature>
<feature type="compositionally biased region" description="Gly residues" evidence="5">
    <location>
        <begin position="863"/>
        <end position="879"/>
    </location>
</feature>
<feature type="compositionally biased region" description="Pro residues" evidence="5">
    <location>
        <begin position="889"/>
        <end position="906"/>
    </location>
</feature>
<feature type="compositionally biased region" description="Low complexity" evidence="5">
    <location>
        <begin position="907"/>
        <end position="934"/>
    </location>
</feature>
<feature type="compositionally biased region" description="Low complexity" evidence="5">
    <location>
        <begin position="945"/>
        <end position="960"/>
    </location>
</feature>
<feature type="compositionally biased region" description="Pro residues" evidence="5">
    <location>
        <begin position="1045"/>
        <end position="1054"/>
    </location>
</feature>
<feature type="compositionally biased region" description="Low complexity" evidence="5">
    <location>
        <begin position="1068"/>
        <end position="1084"/>
    </location>
</feature>
<feature type="compositionally biased region" description="Low complexity" evidence="5">
    <location>
        <begin position="1120"/>
        <end position="1132"/>
    </location>
</feature>
<feature type="compositionally biased region" description="Pro residues" evidence="5">
    <location>
        <begin position="1180"/>
        <end position="1192"/>
    </location>
</feature>
<feature type="binding site" evidence="1">
    <location>
        <position position="1277"/>
    </location>
    <ligand>
        <name>Ca(2+)</name>
        <dbReference type="ChEBI" id="CHEBI:29108"/>
    </ligand>
</feature>
<feature type="binding site" evidence="1">
    <location>
        <position position="1279"/>
    </location>
    <ligand>
        <name>Ca(2+)</name>
        <dbReference type="ChEBI" id="CHEBI:29108"/>
    </ligand>
</feature>
<feature type="binding site" evidence="1">
    <location>
        <position position="1280"/>
    </location>
    <ligand>
        <name>Ca(2+)</name>
        <dbReference type="ChEBI" id="CHEBI:29108"/>
    </ligand>
</feature>
<feature type="binding site" evidence="1">
    <location>
        <position position="1282"/>
    </location>
    <ligand>
        <name>Ca(2+)</name>
        <dbReference type="ChEBI" id="CHEBI:29108"/>
    </ligand>
</feature>
<feature type="binding site" evidence="1">
    <location>
        <position position="1285"/>
    </location>
    <ligand>
        <name>Ca(2+)</name>
        <dbReference type="ChEBI" id="CHEBI:29108"/>
    </ligand>
</feature>
<feature type="modified residue" description="5-hydroxylysine; alternate" evidence="1">
    <location>
        <position position="262"/>
    </location>
</feature>
<feature type="modified residue" description="5-hydroxylysine" evidence="1">
    <location>
        <position position="283"/>
    </location>
</feature>
<feature type="modified residue" description="5-hydroxylysine" evidence="1">
    <location>
        <position position="859"/>
    </location>
</feature>
<feature type="modified residue" description="5-hydroxylysine" evidence="1">
    <location>
        <position position="976"/>
    </location>
</feature>
<feature type="modified residue" description="5-hydroxylysine" evidence="1">
    <location>
        <position position="1093"/>
    </location>
</feature>
<feature type="modified residue" description="5-hydroxylysine" evidence="1">
    <location>
        <position position="1105"/>
    </location>
</feature>
<feature type="glycosylation site" description="O-linked (Gal...) hydroxylysine; alternate" evidence="1">
    <location>
        <position position="262"/>
    </location>
</feature>
<feature type="disulfide bond" description="Interchain" evidence="4">
    <location>
        <position position="1195"/>
    </location>
</feature>
<feature type="disulfide bond" description="Interchain" evidence="4">
    <location>
        <position position="1196"/>
    </location>
</feature>
<feature type="disulfide bond" evidence="4">
    <location>
        <begin position="1259"/>
        <end position="1291"/>
    </location>
</feature>
<feature type="disulfide bond" description="Interchain (with C-1282)" evidence="4">
    <location>
        <position position="1265"/>
    </location>
</feature>
<feature type="disulfide bond" description="Interchain (with C-1265)" evidence="4">
    <location>
        <position position="1282"/>
    </location>
</feature>
<feature type="disulfide bond" evidence="4">
    <location>
        <begin position="1299"/>
        <end position="1461"/>
    </location>
</feature>
<feature type="disulfide bond" evidence="4">
    <location>
        <begin position="1369"/>
        <end position="1414"/>
    </location>
</feature>
<feature type="sequence conflict" description="In Ref. 3; CAA06510." evidence="6" ref="3">
    <original>N</original>
    <variation>D</variation>
    <location>
        <position position="1167"/>
    </location>
</feature>
<feature type="sequence conflict" description="In Ref. 3; CAA06510." evidence="6" ref="3">
    <original>A</original>
    <variation>G</variation>
    <location>
        <position position="1256"/>
    </location>
</feature>
<name>CO3A1_RAT</name>
<comment type="function">
    <text evidence="1">Collagen type III occurs in most soft connective tissues along with type I collagen. Involved in regulation of cortical development. Is the major ligand of ADGRG1 in the developing brain and binding to ADGRG1 inhibits neuronal migration and activates the RhoA pathway by coupling ADGRG1 to GNA13 and possibly GNA12 (By similarity).</text>
</comment>
<comment type="subunit">
    <text evidence="2">Trimers of identical alpha 1(III) chains. The chains are linked to each other by interchain disulfide bonds. Trimers are also cross-linked via hydroxylysines. Interacts with ADGRG1 (By similarity).</text>
</comment>
<comment type="subcellular location">
    <subcellularLocation>
        <location evidence="4">Secreted</location>
        <location evidence="4">Extracellular space</location>
        <location evidence="4">Extracellular matrix</location>
    </subcellularLocation>
</comment>
<comment type="domain">
    <text evidence="1">The C-terminal propeptide, also known as COLFI domain, have crucial roles in tissue growth and repair by controlling both the intracellular assembly of procollagen molecules and the extracellular assembly of collagen fibrils. It binds a calcium ion which is essential for its function (By similarity).</text>
</comment>
<comment type="PTM">
    <text evidence="1">O-glycosylated.</text>
</comment>
<comment type="PTM">
    <text>Prolines at the third position of the tripeptide repeating unit (G-X-Y) are hydroxylated in some or all of the chains.</text>
</comment>
<comment type="similarity">
    <text evidence="4">Belongs to the fibrillar collagen family.</text>
</comment>
<organism>
    <name type="scientific">Rattus norvegicus</name>
    <name type="common">Rat</name>
    <dbReference type="NCBI Taxonomy" id="10116"/>
    <lineage>
        <taxon>Eukaryota</taxon>
        <taxon>Metazoa</taxon>
        <taxon>Chordata</taxon>
        <taxon>Craniata</taxon>
        <taxon>Vertebrata</taxon>
        <taxon>Euteleostomi</taxon>
        <taxon>Mammalia</taxon>
        <taxon>Eutheria</taxon>
        <taxon>Euarchontoglires</taxon>
        <taxon>Glires</taxon>
        <taxon>Rodentia</taxon>
        <taxon>Myomorpha</taxon>
        <taxon>Muroidea</taxon>
        <taxon>Muridae</taxon>
        <taxon>Murinae</taxon>
        <taxon>Rattus</taxon>
    </lineage>
</organism>
<proteinExistence type="evidence at transcript level"/>
<evidence type="ECO:0000250" key="1"/>
<evidence type="ECO:0000250" key="2">
    <source>
        <dbReference type="UniProtKB" id="P02461"/>
    </source>
</evidence>
<evidence type="ECO:0000255" key="3">
    <source>
        <dbReference type="PROSITE-ProRule" id="PRU00220"/>
    </source>
</evidence>
<evidence type="ECO:0000255" key="4">
    <source>
        <dbReference type="PROSITE-ProRule" id="PRU00793"/>
    </source>
</evidence>
<evidence type="ECO:0000256" key="5">
    <source>
        <dbReference type="SAM" id="MobiDB-lite"/>
    </source>
</evidence>
<evidence type="ECO:0000305" key="6"/>
<keyword id="KW-0106">Calcium</keyword>
<keyword id="KW-0176">Collagen</keyword>
<keyword id="KW-1015">Disulfide bond</keyword>
<keyword id="KW-0272">Extracellular matrix</keyword>
<keyword id="KW-0325">Glycoprotein</keyword>
<keyword id="KW-0379">Hydroxylation</keyword>
<keyword id="KW-0479">Metal-binding</keyword>
<keyword id="KW-1185">Reference proteome</keyword>
<keyword id="KW-0677">Repeat</keyword>
<keyword id="KW-0964">Secreted</keyword>
<keyword id="KW-0732">Signal</keyword>
<protein>
    <recommendedName>
        <fullName>Collagen alpha-1(III) chain</fullName>
    </recommendedName>
</protein>
<accession>P13941</accession>
<accession>O70604</accession>
<accession>Q5PQT6</accession>
<reference key="1">
    <citation type="journal article" date="2004" name="Genome Res.">
        <title>The status, quality, and expansion of the NIH full-length cDNA project: the Mammalian Gene Collection (MGC).</title>
        <authorList>
            <consortium name="The MGC Project Team"/>
        </authorList>
    </citation>
    <scope>NUCLEOTIDE SEQUENCE [LARGE SCALE MRNA]</scope>
    <source>
        <tissue>Lung</tissue>
    </source>
</reference>
<reference key="2">
    <citation type="journal article" date="1994" name="Biochim. Biophys. Acta">
        <title>Cloning of cDNA for rat pro alpha 1(III) collagen mRNA. Different expression patterns of type I and type III collagen and fibronectin genes in experimental granulation tissue.</title>
        <authorList>
            <person name="Glumoff V."/>
            <person name="Maekelae J.K."/>
            <person name="Vuorio E."/>
        </authorList>
    </citation>
    <scope>NUCLEOTIDE SEQUENCE [MRNA] OF 828-1463</scope>
</reference>
<reference key="3">
    <citation type="submission" date="1998-04" db="EMBL/GenBank/DDBJ databases">
        <authorList>
            <person name="Wurtz T."/>
            <person name="Ellerstroem C."/>
            <person name="Lundmark C."/>
            <person name="Christersson C."/>
        </authorList>
    </citation>
    <scope>NUCLEOTIDE SEQUENCE [MRNA] OF 900-1463</scope>
    <source>
        <strain>Sprague-Dawley</strain>
        <tissue>Fibroblast</tissue>
    </source>
</reference>
<reference key="4">
    <citation type="journal article" date="1988" name="DNA">
        <title>Regulation of alpha 2(I), alpha 1(III), and alpha 2(V) collagen mRNAs by estradiol in the immature rat uterus.</title>
        <authorList>
            <person name="Frankel F.R."/>
            <person name="Hsu C.-Y.J."/>
            <person name="Meyers J.C."/>
            <person name="Lin E."/>
            <person name="Lyttle C.R."/>
            <person name="Komm B."/>
            <person name="Mohn K."/>
        </authorList>
    </citation>
    <scope>NUCLEOTIDE SEQUENCE [MRNA] OF 1135-1309</scope>
</reference>